<evidence type="ECO:0000255" key="1">
    <source>
        <dbReference type="HAMAP-Rule" id="MF_00063"/>
    </source>
</evidence>
<evidence type="ECO:0000305" key="2"/>
<comment type="function">
    <text evidence="1">Catalyzes the formation of sulfite from adenosine 5'-phosphosulfate (APS) using thioredoxin as an electron donor.</text>
</comment>
<comment type="catalytic activity">
    <reaction evidence="1">
        <text>[thioredoxin]-disulfide + sulfite + AMP + 2 H(+) = adenosine 5'-phosphosulfate + [thioredoxin]-dithiol</text>
        <dbReference type="Rhea" id="RHEA:21976"/>
        <dbReference type="Rhea" id="RHEA-COMP:10698"/>
        <dbReference type="Rhea" id="RHEA-COMP:10700"/>
        <dbReference type="ChEBI" id="CHEBI:15378"/>
        <dbReference type="ChEBI" id="CHEBI:17359"/>
        <dbReference type="ChEBI" id="CHEBI:29950"/>
        <dbReference type="ChEBI" id="CHEBI:50058"/>
        <dbReference type="ChEBI" id="CHEBI:58243"/>
        <dbReference type="ChEBI" id="CHEBI:456215"/>
        <dbReference type="EC" id="1.8.4.10"/>
    </reaction>
</comment>
<comment type="cofactor">
    <cofactor evidence="1">
        <name>[4Fe-4S] cluster</name>
        <dbReference type="ChEBI" id="CHEBI:49883"/>
    </cofactor>
    <text evidence="1">Binds 1 [4Fe-4S] cluster per subunit.</text>
</comment>
<comment type="pathway">
    <text evidence="1">Sulfur metabolism; hydrogen sulfide biosynthesis; sulfite from sulfate.</text>
</comment>
<comment type="subcellular location">
    <subcellularLocation>
        <location evidence="1">Cytoplasm</location>
    </subcellularLocation>
</comment>
<comment type="similarity">
    <text evidence="1 2">Belongs to the PAPS reductase family. CysH subfamily.</text>
</comment>
<organism>
    <name type="scientific">Mycobacterium bovis (strain ATCC BAA-935 / AF2122/97)</name>
    <dbReference type="NCBI Taxonomy" id="233413"/>
    <lineage>
        <taxon>Bacteria</taxon>
        <taxon>Bacillati</taxon>
        <taxon>Actinomycetota</taxon>
        <taxon>Actinomycetes</taxon>
        <taxon>Mycobacteriales</taxon>
        <taxon>Mycobacteriaceae</taxon>
        <taxon>Mycobacterium</taxon>
        <taxon>Mycobacterium tuberculosis complex</taxon>
    </lineage>
</organism>
<keyword id="KW-0963">Cytoplasm</keyword>
<keyword id="KW-0408">Iron</keyword>
<keyword id="KW-0411">Iron-sulfur</keyword>
<keyword id="KW-0479">Metal-binding</keyword>
<keyword id="KW-0560">Oxidoreductase</keyword>
<keyword id="KW-1185">Reference proteome</keyword>
<gene>
    <name evidence="1" type="primary">cysH</name>
    <name type="ordered locus">BQ2027_MB2413</name>
</gene>
<sequence length="254" mass="27423">MSGETTRLTEPQLRELAARGAAELDGATATDMLRWTDETFGDIGGAGGGVSGHRGWTTCNYVVASNMADAVLVDLAAKVRPGVPVIFLDTGYHFVETIGTRDAIESVYDVRVLNVTPEHTVAEQDELLGKDLFARNPHECCRLRKVVPLGKTLRGYSAWVTGLRRVDAPTRANAPLVSFDETFKLVKVNPLAAWTDQDVQEYIADNDVLVNPLVREGYPSIGCAPCTAKPAEGADPRSGRWQGLAKTECGLHAS</sequence>
<accession>P65669</accession>
<accession>A0A1R3Y1A1</accession>
<accession>P71752</accession>
<accession>X2BKC9</accession>
<protein>
    <recommendedName>
        <fullName evidence="1">Adenosine 5'-phosphosulfate reductase</fullName>
        <shortName evidence="1">APS reductase</shortName>
        <ecNumber evidence="1">1.8.4.10</ecNumber>
    </recommendedName>
    <alternativeName>
        <fullName evidence="1">5'-adenylylsulfate reductase</fullName>
    </alternativeName>
    <alternativeName>
        <fullName evidence="1">Thioredoxin-dependent 5'-adenylylsulfate reductase</fullName>
    </alternativeName>
</protein>
<feature type="chain" id="PRO_0000100634" description="Adenosine 5'-phosphosulfate reductase">
    <location>
        <begin position="1"/>
        <end position="254"/>
    </location>
</feature>
<feature type="active site" description="Nucleophile; cysteine thiosulfonate intermediate" evidence="1">
    <location>
        <position position="249"/>
    </location>
</feature>
<feature type="binding site" evidence="1">
    <location>
        <position position="140"/>
    </location>
    <ligand>
        <name>[4Fe-4S] cluster</name>
        <dbReference type="ChEBI" id="CHEBI:49883"/>
    </ligand>
</feature>
<feature type="binding site" evidence="1">
    <location>
        <position position="141"/>
    </location>
    <ligand>
        <name>[4Fe-4S] cluster</name>
        <dbReference type="ChEBI" id="CHEBI:49883"/>
    </ligand>
</feature>
<feature type="binding site" evidence="1">
    <location>
        <position position="223"/>
    </location>
    <ligand>
        <name>[4Fe-4S] cluster</name>
        <dbReference type="ChEBI" id="CHEBI:49883"/>
    </ligand>
</feature>
<feature type="binding site" evidence="1">
    <location>
        <position position="226"/>
    </location>
    <ligand>
        <name>[4Fe-4S] cluster</name>
        <dbReference type="ChEBI" id="CHEBI:49883"/>
    </ligand>
</feature>
<dbReference type="EC" id="1.8.4.10" evidence="1"/>
<dbReference type="EMBL" id="LT708304">
    <property type="protein sequence ID" value="SIU01026.1"/>
    <property type="molecule type" value="Genomic_DNA"/>
</dbReference>
<dbReference type="RefSeq" id="NP_856062.1">
    <property type="nucleotide sequence ID" value="NC_002945.3"/>
</dbReference>
<dbReference type="RefSeq" id="WP_003412303.1">
    <property type="nucleotide sequence ID" value="NC_002945.4"/>
</dbReference>
<dbReference type="SMR" id="P65669"/>
<dbReference type="KEGG" id="mbo:BQ2027_MB2413"/>
<dbReference type="PATRIC" id="fig|233413.5.peg.2652"/>
<dbReference type="Proteomes" id="UP000001419">
    <property type="component" value="Chromosome"/>
</dbReference>
<dbReference type="GO" id="GO:0005737">
    <property type="term" value="C:cytoplasm"/>
    <property type="evidence" value="ECO:0007669"/>
    <property type="project" value="UniProtKB-SubCell"/>
</dbReference>
<dbReference type="GO" id="GO:0051539">
    <property type="term" value="F:4 iron, 4 sulfur cluster binding"/>
    <property type="evidence" value="ECO:0007669"/>
    <property type="project" value="UniProtKB-UniRule"/>
</dbReference>
<dbReference type="GO" id="GO:0043866">
    <property type="term" value="F:adenylyl-sulfate reductase (thioredoxin) activity"/>
    <property type="evidence" value="ECO:0007669"/>
    <property type="project" value="UniProtKB-EC"/>
</dbReference>
<dbReference type="GO" id="GO:0046872">
    <property type="term" value="F:metal ion binding"/>
    <property type="evidence" value="ECO:0007669"/>
    <property type="project" value="UniProtKB-KW"/>
</dbReference>
<dbReference type="GO" id="GO:0004604">
    <property type="term" value="F:phosphoadenylyl-sulfate reductase (thioredoxin) activity"/>
    <property type="evidence" value="ECO:0007669"/>
    <property type="project" value="UniProtKB-UniRule"/>
</dbReference>
<dbReference type="GO" id="GO:0019344">
    <property type="term" value="P:cysteine biosynthetic process"/>
    <property type="evidence" value="ECO:0007669"/>
    <property type="project" value="InterPro"/>
</dbReference>
<dbReference type="GO" id="GO:0070814">
    <property type="term" value="P:hydrogen sulfide biosynthetic process"/>
    <property type="evidence" value="ECO:0007669"/>
    <property type="project" value="UniProtKB-UniRule"/>
</dbReference>
<dbReference type="GO" id="GO:0019379">
    <property type="term" value="P:sulfate assimilation, phosphoadenylyl sulfate reduction by phosphoadenylyl-sulfate reductase (thioredoxin)"/>
    <property type="evidence" value="ECO:0007669"/>
    <property type="project" value="UniProtKB-UniRule"/>
</dbReference>
<dbReference type="CDD" id="cd23945">
    <property type="entry name" value="PAPS_reductase"/>
    <property type="match status" value="1"/>
</dbReference>
<dbReference type="FunFam" id="3.40.50.620:FF:000136">
    <property type="entry name" value="Probable phosphoadenosine phosphosulfate reductase"/>
    <property type="match status" value="1"/>
</dbReference>
<dbReference type="Gene3D" id="3.40.50.620">
    <property type="entry name" value="HUPs"/>
    <property type="match status" value="1"/>
</dbReference>
<dbReference type="HAMAP" id="MF_00063">
    <property type="entry name" value="CysH"/>
    <property type="match status" value="1"/>
</dbReference>
<dbReference type="InterPro" id="IPR011798">
    <property type="entry name" value="APS_reductase"/>
</dbReference>
<dbReference type="InterPro" id="IPR004511">
    <property type="entry name" value="PAPS/APS_Rdtase"/>
</dbReference>
<dbReference type="InterPro" id="IPR002500">
    <property type="entry name" value="PAPS_reduct_dom"/>
</dbReference>
<dbReference type="InterPro" id="IPR014729">
    <property type="entry name" value="Rossmann-like_a/b/a_fold"/>
</dbReference>
<dbReference type="NCBIfam" id="TIGR02055">
    <property type="entry name" value="APS_reductase"/>
    <property type="match status" value="1"/>
</dbReference>
<dbReference type="NCBIfam" id="TIGR00434">
    <property type="entry name" value="cysH"/>
    <property type="match status" value="1"/>
</dbReference>
<dbReference type="NCBIfam" id="NF002537">
    <property type="entry name" value="PRK02090.1"/>
    <property type="match status" value="1"/>
</dbReference>
<dbReference type="PANTHER" id="PTHR46509">
    <property type="entry name" value="PHOSPHOADENOSINE PHOSPHOSULFATE REDUCTASE"/>
    <property type="match status" value="1"/>
</dbReference>
<dbReference type="PANTHER" id="PTHR46509:SF1">
    <property type="entry name" value="PHOSPHOADENOSINE PHOSPHOSULFATE REDUCTASE"/>
    <property type="match status" value="1"/>
</dbReference>
<dbReference type="Pfam" id="PF01507">
    <property type="entry name" value="PAPS_reduct"/>
    <property type="match status" value="1"/>
</dbReference>
<dbReference type="PIRSF" id="PIRSF000857">
    <property type="entry name" value="PAPS_reductase"/>
    <property type="match status" value="1"/>
</dbReference>
<dbReference type="SUPFAM" id="SSF52402">
    <property type="entry name" value="Adenine nucleotide alpha hydrolases-like"/>
    <property type="match status" value="1"/>
</dbReference>
<proteinExistence type="inferred from homology"/>
<reference key="1">
    <citation type="journal article" date="2003" name="Proc. Natl. Acad. Sci. U.S.A.">
        <title>The complete genome sequence of Mycobacterium bovis.</title>
        <authorList>
            <person name="Garnier T."/>
            <person name="Eiglmeier K."/>
            <person name="Camus J.-C."/>
            <person name="Medina N."/>
            <person name="Mansoor H."/>
            <person name="Pryor M."/>
            <person name="Duthoy S."/>
            <person name="Grondin S."/>
            <person name="Lacroix C."/>
            <person name="Monsempe C."/>
            <person name="Simon S."/>
            <person name="Harris B."/>
            <person name="Atkin R."/>
            <person name="Doggett J."/>
            <person name="Mayes R."/>
            <person name="Keating L."/>
            <person name="Wheeler P.R."/>
            <person name="Parkhill J."/>
            <person name="Barrell B.G."/>
            <person name="Cole S.T."/>
            <person name="Gordon S.V."/>
            <person name="Hewinson R.G."/>
        </authorList>
    </citation>
    <scope>NUCLEOTIDE SEQUENCE [LARGE SCALE GENOMIC DNA]</scope>
    <source>
        <strain>ATCC BAA-935 / AF2122/97</strain>
    </source>
</reference>
<reference key="2">
    <citation type="journal article" date="2017" name="Genome Announc.">
        <title>Updated reference genome sequence and annotation of Mycobacterium bovis AF2122/97.</title>
        <authorList>
            <person name="Malone K.M."/>
            <person name="Farrell D."/>
            <person name="Stuber T.P."/>
            <person name="Schubert O.T."/>
            <person name="Aebersold R."/>
            <person name="Robbe-Austerman S."/>
            <person name="Gordon S.V."/>
        </authorList>
    </citation>
    <scope>NUCLEOTIDE SEQUENCE [LARGE SCALE GENOMIC DNA]</scope>
    <scope>GENOME REANNOTATION</scope>
    <source>
        <strain>ATCC BAA-935 / AF2122/97</strain>
    </source>
</reference>
<name>CYSH_MYCBO</name>